<name>Y1836_STAS1</name>
<proteinExistence type="inferred from homology"/>
<organism>
    <name type="scientific">Staphylococcus saprophyticus subsp. saprophyticus (strain ATCC 15305 / DSM 20229 / NCIMB 8711 / NCTC 7292 / S-41)</name>
    <dbReference type="NCBI Taxonomy" id="342451"/>
    <lineage>
        <taxon>Bacteria</taxon>
        <taxon>Bacillati</taxon>
        <taxon>Bacillota</taxon>
        <taxon>Bacilli</taxon>
        <taxon>Bacillales</taxon>
        <taxon>Staphylococcaceae</taxon>
        <taxon>Staphylococcus</taxon>
    </lineage>
</organism>
<reference key="1">
    <citation type="journal article" date="2005" name="Proc. Natl. Acad. Sci. U.S.A.">
        <title>Whole genome sequence of Staphylococcus saprophyticus reveals the pathogenesis of uncomplicated urinary tract infection.</title>
        <authorList>
            <person name="Kuroda M."/>
            <person name="Yamashita A."/>
            <person name="Hirakawa H."/>
            <person name="Kumano M."/>
            <person name="Morikawa K."/>
            <person name="Higashide M."/>
            <person name="Maruyama A."/>
            <person name="Inose Y."/>
            <person name="Matoba K."/>
            <person name="Toh H."/>
            <person name="Kuhara S."/>
            <person name="Hattori M."/>
            <person name="Ohta T."/>
        </authorList>
    </citation>
    <scope>NUCLEOTIDE SEQUENCE [LARGE SCALE GENOMIC DNA]</scope>
    <source>
        <strain>ATCC 15305 / DSM 20229 / NCIMB 8711 / NCTC 7292 / S-41</strain>
    </source>
</reference>
<comment type="similarity">
    <text evidence="1">Belongs to the UPF0349 family.</text>
</comment>
<feature type="chain" id="PRO_0000300208" description="UPF0349 protein SSP1836">
    <location>
        <begin position="1"/>
        <end position="78"/>
    </location>
</feature>
<accession>Q49W78</accession>
<gene>
    <name type="ordered locus">SSP1836</name>
</gene>
<keyword id="KW-1185">Reference proteome</keyword>
<sequence length="78" mass="8632">MNPIVEFCISNLAKGGDYVYNQLENDPGIDVLEYGCLQNCGICSSGLYALVNGDIVEGESPDDLLQKIYAHIEETWIF</sequence>
<evidence type="ECO:0000255" key="1">
    <source>
        <dbReference type="HAMAP-Rule" id="MF_01542"/>
    </source>
</evidence>
<protein>
    <recommendedName>
        <fullName evidence="1">UPF0349 protein SSP1836</fullName>
    </recommendedName>
</protein>
<dbReference type="EMBL" id="AP008934">
    <property type="protein sequence ID" value="BAE18981.1"/>
    <property type="molecule type" value="Genomic_DNA"/>
</dbReference>
<dbReference type="RefSeq" id="WP_002483813.1">
    <property type="nucleotide sequence ID" value="NZ_MTGA01000039.1"/>
</dbReference>
<dbReference type="SMR" id="Q49W78"/>
<dbReference type="KEGG" id="ssp:SSP1836"/>
<dbReference type="eggNOG" id="COG4844">
    <property type="taxonomic scope" value="Bacteria"/>
</dbReference>
<dbReference type="HOGENOM" id="CLU_182025_0_0_9"/>
<dbReference type="OrthoDB" id="1684419at2"/>
<dbReference type="Proteomes" id="UP000006371">
    <property type="component" value="Chromosome"/>
</dbReference>
<dbReference type="HAMAP" id="MF_01542">
    <property type="entry name" value="UPF0349"/>
    <property type="match status" value="1"/>
</dbReference>
<dbReference type="InterPro" id="IPR009910">
    <property type="entry name" value="DUF1450"/>
</dbReference>
<dbReference type="InterPro" id="IPR022916">
    <property type="entry name" value="UPF0349"/>
</dbReference>
<dbReference type="NCBIfam" id="NF010190">
    <property type="entry name" value="PRK13669.1"/>
    <property type="match status" value="1"/>
</dbReference>
<dbReference type="Pfam" id="PF07293">
    <property type="entry name" value="DUF1450"/>
    <property type="match status" value="1"/>
</dbReference>